<accession>A7FH60</accession>
<organism>
    <name type="scientific">Yersinia pseudotuberculosis serotype O:1b (strain IP 31758)</name>
    <dbReference type="NCBI Taxonomy" id="349747"/>
    <lineage>
        <taxon>Bacteria</taxon>
        <taxon>Pseudomonadati</taxon>
        <taxon>Pseudomonadota</taxon>
        <taxon>Gammaproteobacteria</taxon>
        <taxon>Enterobacterales</taxon>
        <taxon>Yersiniaceae</taxon>
        <taxon>Yersinia</taxon>
    </lineage>
</organism>
<name>HFLD_YERP3</name>
<sequence>MAKNYYDITLALAGICQSARLVQQLAHEGQCDNDALNTVLRGLLQTNPSSTLAVYGDTEQVLKMGLETLQSVLNANRQGEAAELTRYTLSLMVLERKLSASKSAMNTLGERISQLDRQLAHFDLESETMMSSLASIYVDVVSPLGPRIQVTGSPAILQSPLVQAKVRATLLAGIRSAVLWQQVGGSRLQLMFSRNRLFKQAQSILAHT</sequence>
<proteinExistence type="inferred from homology"/>
<comment type="subcellular location">
    <subcellularLocation>
        <location>Cytoplasm</location>
    </subcellularLocation>
    <subcellularLocation>
        <location evidence="1">Cell inner membrane</location>
        <topology evidence="1">Peripheral membrane protein</topology>
        <orientation evidence="1">Cytoplasmic side</orientation>
    </subcellularLocation>
</comment>
<comment type="similarity">
    <text evidence="1">Belongs to the HflD family.</text>
</comment>
<gene>
    <name evidence="1" type="primary">hflD</name>
    <name type="ordered locus">YpsIP31758_1611</name>
</gene>
<protein>
    <recommendedName>
        <fullName evidence="1">High frequency lysogenization protein HflD homolog</fullName>
    </recommendedName>
</protein>
<dbReference type="EMBL" id="CP000720">
    <property type="protein sequence ID" value="ABS48821.1"/>
    <property type="molecule type" value="Genomic_DNA"/>
</dbReference>
<dbReference type="RefSeq" id="WP_002210914.1">
    <property type="nucleotide sequence ID" value="NC_009708.1"/>
</dbReference>
<dbReference type="SMR" id="A7FH60"/>
<dbReference type="GeneID" id="57976936"/>
<dbReference type="KEGG" id="ypi:YpsIP31758_1611"/>
<dbReference type="HOGENOM" id="CLU_098920_0_0_6"/>
<dbReference type="Proteomes" id="UP000002412">
    <property type="component" value="Chromosome"/>
</dbReference>
<dbReference type="GO" id="GO:0005737">
    <property type="term" value="C:cytoplasm"/>
    <property type="evidence" value="ECO:0007669"/>
    <property type="project" value="UniProtKB-SubCell"/>
</dbReference>
<dbReference type="GO" id="GO:0005886">
    <property type="term" value="C:plasma membrane"/>
    <property type="evidence" value="ECO:0007669"/>
    <property type="project" value="UniProtKB-SubCell"/>
</dbReference>
<dbReference type="FunFam" id="1.10.3890.10:FF:000001">
    <property type="entry name" value="High frequency lysogenization protein HflD homolog"/>
    <property type="match status" value="1"/>
</dbReference>
<dbReference type="Gene3D" id="1.10.3890.10">
    <property type="entry name" value="HflD-like"/>
    <property type="match status" value="1"/>
</dbReference>
<dbReference type="HAMAP" id="MF_00695">
    <property type="entry name" value="HflD_protein"/>
    <property type="match status" value="1"/>
</dbReference>
<dbReference type="InterPro" id="IPR007451">
    <property type="entry name" value="HflD"/>
</dbReference>
<dbReference type="InterPro" id="IPR035932">
    <property type="entry name" value="HflD-like_sf"/>
</dbReference>
<dbReference type="NCBIfam" id="NF001246">
    <property type="entry name" value="PRK00218.1-2"/>
    <property type="match status" value="1"/>
</dbReference>
<dbReference type="NCBIfam" id="NF001248">
    <property type="entry name" value="PRK00218.1-4"/>
    <property type="match status" value="1"/>
</dbReference>
<dbReference type="NCBIfam" id="NF001249">
    <property type="entry name" value="PRK00218.1-5"/>
    <property type="match status" value="1"/>
</dbReference>
<dbReference type="PANTHER" id="PTHR38100">
    <property type="entry name" value="HIGH FREQUENCY LYSOGENIZATION PROTEIN HFLD"/>
    <property type="match status" value="1"/>
</dbReference>
<dbReference type="PANTHER" id="PTHR38100:SF1">
    <property type="entry name" value="HIGH FREQUENCY LYSOGENIZATION PROTEIN HFLD"/>
    <property type="match status" value="1"/>
</dbReference>
<dbReference type="Pfam" id="PF04356">
    <property type="entry name" value="DUF489"/>
    <property type="match status" value="1"/>
</dbReference>
<dbReference type="SUPFAM" id="SSF101322">
    <property type="entry name" value="YcfC-like"/>
    <property type="match status" value="1"/>
</dbReference>
<reference key="1">
    <citation type="journal article" date="2007" name="PLoS Genet.">
        <title>The complete genome sequence of Yersinia pseudotuberculosis IP31758, the causative agent of Far East scarlet-like fever.</title>
        <authorList>
            <person name="Eppinger M."/>
            <person name="Rosovitz M.J."/>
            <person name="Fricke W.F."/>
            <person name="Rasko D.A."/>
            <person name="Kokorina G."/>
            <person name="Fayolle C."/>
            <person name="Lindler L.E."/>
            <person name="Carniel E."/>
            <person name="Ravel J."/>
        </authorList>
    </citation>
    <scope>NUCLEOTIDE SEQUENCE [LARGE SCALE GENOMIC DNA]</scope>
    <source>
        <strain>IP 31758</strain>
    </source>
</reference>
<keyword id="KW-0997">Cell inner membrane</keyword>
<keyword id="KW-1003">Cell membrane</keyword>
<keyword id="KW-0963">Cytoplasm</keyword>
<keyword id="KW-0472">Membrane</keyword>
<feature type="chain" id="PRO_1000062054" description="High frequency lysogenization protein HflD homolog">
    <location>
        <begin position="1"/>
        <end position="208"/>
    </location>
</feature>
<evidence type="ECO:0000255" key="1">
    <source>
        <dbReference type="HAMAP-Rule" id="MF_00695"/>
    </source>
</evidence>